<proteinExistence type="inferred from homology"/>
<name>Y4205_KORVE</name>
<feature type="chain" id="PRO_1000056754" description="UPF0235 protein Acid345_4205">
    <location>
        <begin position="1"/>
        <end position="96"/>
    </location>
</feature>
<comment type="similarity">
    <text evidence="1">Belongs to the UPF0235 family.</text>
</comment>
<protein>
    <recommendedName>
        <fullName evidence="1">UPF0235 protein Acid345_4205</fullName>
    </recommendedName>
</protein>
<sequence length="96" mass="10402">MIEIRETSSGVSFAVRLQPKAKKTAIIGELNGALKLGVTDPPIDGRANEALIRFVAGLLKVTRSSVTIAAGESSRNKVIRIEGVTAEQVRFRLKVW</sequence>
<gene>
    <name type="ordered locus">Acid345_4205</name>
</gene>
<accession>Q1IIU5</accession>
<dbReference type="EMBL" id="CP000360">
    <property type="protein sequence ID" value="ABF43205.1"/>
    <property type="molecule type" value="Genomic_DNA"/>
</dbReference>
<dbReference type="RefSeq" id="WP_011525004.1">
    <property type="nucleotide sequence ID" value="NC_008009.1"/>
</dbReference>
<dbReference type="SMR" id="Q1IIU5"/>
<dbReference type="STRING" id="204669.Acid345_4205"/>
<dbReference type="EnsemblBacteria" id="ABF43205">
    <property type="protein sequence ID" value="ABF43205"/>
    <property type="gene ID" value="Acid345_4205"/>
</dbReference>
<dbReference type="KEGG" id="aba:Acid345_4205"/>
<dbReference type="eggNOG" id="COG1872">
    <property type="taxonomic scope" value="Bacteria"/>
</dbReference>
<dbReference type="HOGENOM" id="CLU_130694_6_0_0"/>
<dbReference type="OrthoDB" id="9800587at2"/>
<dbReference type="Proteomes" id="UP000002432">
    <property type="component" value="Chromosome"/>
</dbReference>
<dbReference type="GO" id="GO:0005737">
    <property type="term" value="C:cytoplasm"/>
    <property type="evidence" value="ECO:0007669"/>
    <property type="project" value="TreeGrafter"/>
</dbReference>
<dbReference type="Gene3D" id="3.30.1200.10">
    <property type="entry name" value="YggU-like"/>
    <property type="match status" value="1"/>
</dbReference>
<dbReference type="HAMAP" id="MF_00634">
    <property type="entry name" value="UPF0235"/>
    <property type="match status" value="1"/>
</dbReference>
<dbReference type="InterPro" id="IPR003746">
    <property type="entry name" value="DUF167"/>
</dbReference>
<dbReference type="InterPro" id="IPR036591">
    <property type="entry name" value="YggU-like_sf"/>
</dbReference>
<dbReference type="NCBIfam" id="TIGR00251">
    <property type="entry name" value="DUF167 family protein"/>
    <property type="match status" value="1"/>
</dbReference>
<dbReference type="PANTHER" id="PTHR13420">
    <property type="entry name" value="UPF0235 PROTEIN C15ORF40"/>
    <property type="match status" value="1"/>
</dbReference>
<dbReference type="PANTHER" id="PTHR13420:SF7">
    <property type="entry name" value="UPF0235 PROTEIN C15ORF40"/>
    <property type="match status" value="1"/>
</dbReference>
<dbReference type="Pfam" id="PF02594">
    <property type="entry name" value="DUF167"/>
    <property type="match status" value="1"/>
</dbReference>
<dbReference type="SMART" id="SM01152">
    <property type="entry name" value="DUF167"/>
    <property type="match status" value="1"/>
</dbReference>
<dbReference type="SUPFAM" id="SSF69786">
    <property type="entry name" value="YggU-like"/>
    <property type="match status" value="1"/>
</dbReference>
<reference key="1">
    <citation type="journal article" date="2009" name="Appl. Environ. Microbiol.">
        <title>Three genomes from the phylum Acidobacteria provide insight into the lifestyles of these microorganisms in soils.</title>
        <authorList>
            <person name="Ward N.L."/>
            <person name="Challacombe J.F."/>
            <person name="Janssen P.H."/>
            <person name="Henrissat B."/>
            <person name="Coutinho P.M."/>
            <person name="Wu M."/>
            <person name="Xie G."/>
            <person name="Haft D.H."/>
            <person name="Sait M."/>
            <person name="Badger J."/>
            <person name="Barabote R.D."/>
            <person name="Bradley B."/>
            <person name="Brettin T.S."/>
            <person name="Brinkac L.M."/>
            <person name="Bruce D."/>
            <person name="Creasy T."/>
            <person name="Daugherty S.C."/>
            <person name="Davidsen T.M."/>
            <person name="DeBoy R.T."/>
            <person name="Detter J.C."/>
            <person name="Dodson R.J."/>
            <person name="Durkin A.S."/>
            <person name="Ganapathy A."/>
            <person name="Gwinn-Giglio M."/>
            <person name="Han C.S."/>
            <person name="Khouri H."/>
            <person name="Kiss H."/>
            <person name="Kothari S.P."/>
            <person name="Madupu R."/>
            <person name="Nelson K.E."/>
            <person name="Nelson W.C."/>
            <person name="Paulsen I."/>
            <person name="Penn K."/>
            <person name="Ren Q."/>
            <person name="Rosovitz M.J."/>
            <person name="Selengut J.D."/>
            <person name="Shrivastava S."/>
            <person name="Sullivan S.A."/>
            <person name="Tapia R."/>
            <person name="Thompson L.S."/>
            <person name="Watkins K.L."/>
            <person name="Yang Q."/>
            <person name="Yu C."/>
            <person name="Zafar N."/>
            <person name="Zhou L."/>
            <person name="Kuske C.R."/>
        </authorList>
    </citation>
    <scope>NUCLEOTIDE SEQUENCE [LARGE SCALE GENOMIC DNA]</scope>
    <source>
        <strain>Ellin345</strain>
    </source>
</reference>
<evidence type="ECO:0000255" key="1">
    <source>
        <dbReference type="HAMAP-Rule" id="MF_00634"/>
    </source>
</evidence>
<keyword id="KW-1185">Reference proteome</keyword>
<organism>
    <name type="scientific">Koribacter versatilis (strain Ellin345)</name>
    <dbReference type="NCBI Taxonomy" id="204669"/>
    <lineage>
        <taxon>Bacteria</taxon>
        <taxon>Pseudomonadati</taxon>
        <taxon>Acidobacteriota</taxon>
        <taxon>Terriglobia</taxon>
        <taxon>Terriglobales</taxon>
        <taxon>Candidatus Korobacteraceae</taxon>
        <taxon>Candidatus Korobacter</taxon>
    </lineage>
</organism>